<sequence length="129" mass="13692">MNDLINFEIVTPLGVIYQGEVKSVTLPGSEGEFGVLKGHAALVSSLKSGVIDIEKADLNHELIAIDAGHAKVDEDKICVLAKGAVWVCGSDESEIEKNLAQAKDLIKSMSSDNAALAATFSKLDNARMH</sequence>
<gene>
    <name evidence="1" type="primary">atpC</name>
    <name type="ordered locus">CJE0103</name>
</gene>
<proteinExistence type="inferred from homology"/>
<feature type="chain" id="PRO_0000265798" description="ATP synthase epsilon chain">
    <location>
        <begin position="1"/>
        <end position="129"/>
    </location>
</feature>
<dbReference type="EMBL" id="CP000025">
    <property type="protein sequence ID" value="AAW34698.1"/>
    <property type="molecule type" value="Genomic_DNA"/>
</dbReference>
<dbReference type="RefSeq" id="WP_002851752.1">
    <property type="nucleotide sequence ID" value="NC_003912.7"/>
</dbReference>
<dbReference type="SMR" id="Q5HX58"/>
<dbReference type="KEGG" id="cjr:CJE0103"/>
<dbReference type="HOGENOM" id="CLU_084338_2_1_7"/>
<dbReference type="GO" id="GO:0005886">
    <property type="term" value="C:plasma membrane"/>
    <property type="evidence" value="ECO:0007669"/>
    <property type="project" value="UniProtKB-SubCell"/>
</dbReference>
<dbReference type="GO" id="GO:0045259">
    <property type="term" value="C:proton-transporting ATP synthase complex"/>
    <property type="evidence" value="ECO:0007669"/>
    <property type="project" value="UniProtKB-KW"/>
</dbReference>
<dbReference type="GO" id="GO:0005524">
    <property type="term" value="F:ATP binding"/>
    <property type="evidence" value="ECO:0007669"/>
    <property type="project" value="UniProtKB-UniRule"/>
</dbReference>
<dbReference type="GO" id="GO:0046933">
    <property type="term" value="F:proton-transporting ATP synthase activity, rotational mechanism"/>
    <property type="evidence" value="ECO:0007669"/>
    <property type="project" value="UniProtKB-UniRule"/>
</dbReference>
<dbReference type="CDD" id="cd12152">
    <property type="entry name" value="F1-ATPase_delta"/>
    <property type="match status" value="1"/>
</dbReference>
<dbReference type="Gene3D" id="2.60.15.10">
    <property type="entry name" value="F0F1 ATP synthase delta/epsilon subunit, N-terminal"/>
    <property type="match status" value="1"/>
</dbReference>
<dbReference type="HAMAP" id="MF_00530">
    <property type="entry name" value="ATP_synth_epsil_bac"/>
    <property type="match status" value="1"/>
</dbReference>
<dbReference type="InterPro" id="IPR001469">
    <property type="entry name" value="ATP_synth_F1_dsu/esu"/>
</dbReference>
<dbReference type="InterPro" id="IPR020546">
    <property type="entry name" value="ATP_synth_F1_dsu/esu_N"/>
</dbReference>
<dbReference type="InterPro" id="IPR036771">
    <property type="entry name" value="ATPsynth_dsu/esu_N"/>
</dbReference>
<dbReference type="NCBIfam" id="TIGR01216">
    <property type="entry name" value="ATP_synt_epsi"/>
    <property type="match status" value="1"/>
</dbReference>
<dbReference type="PANTHER" id="PTHR13822">
    <property type="entry name" value="ATP SYNTHASE DELTA/EPSILON CHAIN"/>
    <property type="match status" value="1"/>
</dbReference>
<dbReference type="PANTHER" id="PTHR13822:SF10">
    <property type="entry name" value="ATP SYNTHASE EPSILON CHAIN, CHLOROPLASTIC"/>
    <property type="match status" value="1"/>
</dbReference>
<dbReference type="Pfam" id="PF02823">
    <property type="entry name" value="ATP-synt_DE_N"/>
    <property type="match status" value="1"/>
</dbReference>
<dbReference type="SUPFAM" id="SSF51344">
    <property type="entry name" value="Epsilon subunit of F1F0-ATP synthase N-terminal domain"/>
    <property type="match status" value="1"/>
</dbReference>
<keyword id="KW-0066">ATP synthesis</keyword>
<keyword id="KW-0997">Cell inner membrane</keyword>
<keyword id="KW-1003">Cell membrane</keyword>
<keyword id="KW-0139">CF(1)</keyword>
<keyword id="KW-0375">Hydrogen ion transport</keyword>
<keyword id="KW-0406">Ion transport</keyword>
<keyword id="KW-0472">Membrane</keyword>
<keyword id="KW-0813">Transport</keyword>
<evidence type="ECO:0000255" key="1">
    <source>
        <dbReference type="HAMAP-Rule" id="MF_00530"/>
    </source>
</evidence>
<protein>
    <recommendedName>
        <fullName evidence="1">ATP synthase epsilon chain</fullName>
    </recommendedName>
    <alternativeName>
        <fullName evidence="1">ATP synthase F1 sector epsilon subunit</fullName>
    </alternativeName>
    <alternativeName>
        <fullName evidence="1">F-ATPase epsilon subunit</fullName>
    </alternativeName>
</protein>
<reference key="1">
    <citation type="journal article" date="2005" name="PLoS Biol.">
        <title>Major structural differences and novel potential virulence mechanisms from the genomes of multiple Campylobacter species.</title>
        <authorList>
            <person name="Fouts D.E."/>
            <person name="Mongodin E.F."/>
            <person name="Mandrell R.E."/>
            <person name="Miller W.G."/>
            <person name="Rasko D.A."/>
            <person name="Ravel J."/>
            <person name="Brinkac L.M."/>
            <person name="DeBoy R.T."/>
            <person name="Parker C.T."/>
            <person name="Daugherty S.C."/>
            <person name="Dodson R.J."/>
            <person name="Durkin A.S."/>
            <person name="Madupu R."/>
            <person name="Sullivan S.A."/>
            <person name="Shetty J.U."/>
            <person name="Ayodeji M.A."/>
            <person name="Shvartsbeyn A."/>
            <person name="Schatz M.C."/>
            <person name="Badger J.H."/>
            <person name="Fraser C.M."/>
            <person name="Nelson K.E."/>
        </authorList>
    </citation>
    <scope>NUCLEOTIDE SEQUENCE [LARGE SCALE GENOMIC DNA]</scope>
    <source>
        <strain>RM1221</strain>
    </source>
</reference>
<organism>
    <name type="scientific">Campylobacter jejuni (strain RM1221)</name>
    <dbReference type="NCBI Taxonomy" id="195099"/>
    <lineage>
        <taxon>Bacteria</taxon>
        <taxon>Pseudomonadati</taxon>
        <taxon>Campylobacterota</taxon>
        <taxon>Epsilonproteobacteria</taxon>
        <taxon>Campylobacterales</taxon>
        <taxon>Campylobacteraceae</taxon>
        <taxon>Campylobacter</taxon>
    </lineage>
</organism>
<name>ATPE_CAMJR</name>
<accession>Q5HX58</accession>
<comment type="function">
    <text evidence="1">Produces ATP from ADP in the presence of a proton gradient across the membrane.</text>
</comment>
<comment type="subunit">
    <text>F-type ATPases have 2 components, CF(1) - the catalytic core - and CF(0) - the membrane proton channel. CF(1) has five subunits: alpha(3), beta(3), gamma(1), delta(1), epsilon(1). CF(0) has three main subunits: a, b and c.</text>
</comment>
<comment type="subcellular location">
    <subcellularLocation>
        <location evidence="1">Cell inner membrane</location>
        <topology evidence="1">Peripheral membrane protein</topology>
    </subcellularLocation>
</comment>
<comment type="similarity">
    <text evidence="1">Belongs to the ATPase epsilon chain family.</text>
</comment>